<name>CASB_PIG</name>
<feature type="signal peptide" evidence="5">
    <location>
        <begin position="1"/>
        <end position="15"/>
    </location>
</feature>
<feature type="chain" id="PRO_0000004478" description="Beta-casein">
    <location>
        <begin position="16"/>
        <end position="232"/>
    </location>
</feature>
<feature type="region of interest" description="Disordered" evidence="4">
    <location>
        <begin position="48"/>
        <end position="74"/>
    </location>
</feature>
<feature type="compositionally biased region" description="Basic and acidic residues" evidence="4">
    <location>
        <begin position="48"/>
        <end position="63"/>
    </location>
</feature>
<feature type="modified residue" description="Phosphoserine" evidence="2">
    <location>
        <position position="24"/>
    </location>
</feature>
<feature type="modified residue" description="Phosphothreonine" evidence="2">
    <location>
        <position position="27"/>
    </location>
</feature>
<feature type="modified residue" description="Phosphoserine" evidence="1">
    <location>
        <position position="30"/>
    </location>
</feature>
<feature type="modified residue" description="Phosphoserine" evidence="1">
    <location>
        <position position="32"/>
    </location>
</feature>
<feature type="modified residue" description="Phosphoserine" evidence="1">
    <location>
        <position position="33"/>
    </location>
</feature>
<feature type="modified residue" description="Phosphoserine" evidence="1">
    <location>
        <position position="34"/>
    </location>
</feature>
<feature type="glycosylation site" description="N-linked (GlcNAc...) asparagine" evidence="3">
    <location>
        <position position="22"/>
    </location>
</feature>
<sequence>MKLLILACFVALALARAKEELNASGETVESLSSSEESITHISKEKIEKLKREEQQQTENERQNKIHQFPQPQPLAHPYTEPIPYPILPQNILPLAQVPVVVPLLHPEVMKDSKAKETIVPKRKGMPFPKSPAEPFVEGQSLTLTDFEVLSLPLLQSLMHQIPQPVPQTPMFAPQPLLSLPQAKVLPVPQQVVPFPQRDMPFQALLLYQDPLLGPLQGFYPVPQPVAPVYNPV</sequence>
<comment type="function">
    <text>Important role in determination of the surface properties of the casein micelles.</text>
</comment>
<comment type="subcellular location">
    <subcellularLocation>
        <location>Secreted</location>
    </subcellularLocation>
</comment>
<comment type="tissue specificity">
    <text>Mammary gland specific. Secreted in milk.</text>
</comment>
<comment type="similarity">
    <text evidence="6">Belongs to the beta-casein family.</text>
</comment>
<reference key="1">
    <citation type="journal article" date="1992" name="Anim. Genet.">
        <title>The sequence of porcine beta-casein cDNA.</title>
        <authorList>
            <person name="Alexander L.J."/>
            <person name="Beattie C.W."/>
        </authorList>
    </citation>
    <scope>NUCLEOTIDE SEQUENCE [MRNA]</scope>
    <source>
        <tissue>Mammary gland</tissue>
    </source>
</reference>
<reference key="2">
    <citation type="journal article" date="2002" name="J. Anim. Sci.">
        <title>Purification of porcine beta-casein, N-terminal sequence, quantification in mastitic milk.</title>
        <authorList>
            <person name="Kauf A.C.W."/>
            <person name="Kensinger R.S."/>
        </authorList>
    </citation>
    <scope>PROTEIN SEQUENCE OF 16-29</scope>
    <source>
        <tissue>Milk</tissue>
    </source>
</reference>
<reference key="3">
    <citation type="journal article" date="1979" name="Biochim. Biophys. Acta">
        <title>Isolation and characterization of porcine beta-casein.</title>
        <authorList>
            <person name="Mulvihill D.M."/>
            <person name="Fox P.F."/>
        </authorList>
    </citation>
    <scope>CHARACTERIZATION</scope>
    <source>
        <tissue>Milk</tissue>
    </source>
</reference>
<protein>
    <recommendedName>
        <fullName>Beta-casein</fullName>
    </recommendedName>
</protein>
<evidence type="ECO:0000250" key="1">
    <source>
        <dbReference type="UniProtKB" id="P05814"/>
    </source>
</evidence>
<evidence type="ECO:0000250" key="2">
    <source>
        <dbReference type="UniProtKB" id="Q9GKK3"/>
    </source>
</evidence>
<evidence type="ECO:0000255" key="3"/>
<evidence type="ECO:0000256" key="4">
    <source>
        <dbReference type="SAM" id="MobiDB-lite"/>
    </source>
</evidence>
<evidence type="ECO:0000269" key="5">
    <source>
    </source>
</evidence>
<evidence type="ECO:0000305" key="6"/>
<proteinExistence type="evidence at protein level"/>
<accession>P39037</accession>
<gene>
    <name type="primary">CSN2</name>
</gene>
<organism>
    <name type="scientific">Sus scrofa</name>
    <name type="common">Pig</name>
    <dbReference type="NCBI Taxonomy" id="9823"/>
    <lineage>
        <taxon>Eukaryota</taxon>
        <taxon>Metazoa</taxon>
        <taxon>Chordata</taxon>
        <taxon>Craniata</taxon>
        <taxon>Vertebrata</taxon>
        <taxon>Euteleostomi</taxon>
        <taxon>Mammalia</taxon>
        <taxon>Eutheria</taxon>
        <taxon>Laurasiatheria</taxon>
        <taxon>Artiodactyla</taxon>
        <taxon>Suina</taxon>
        <taxon>Suidae</taxon>
        <taxon>Sus</taxon>
    </lineage>
</organism>
<keyword id="KW-0903">Direct protein sequencing</keyword>
<keyword id="KW-0325">Glycoprotein</keyword>
<keyword id="KW-0494">Milk protein</keyword>
<keyword id="KW-0597">Phosphoprotein</keyword>
<keyword id="KW-1185">Reference proteome</keyword>
<keyword id="KW-0964">Secreted</keyword>
<keyword id="KW-0732">Signal</keyword>
<dbReference type="EMBL" id="X54974">
    <property type="protein sequence ID" value="CAA38718.1"/>
    <property type="molecule type" value="mRNA"/>
</dbReference>
<dbReference type="PIR" id="A48384">
    <property type="entry name" value="A48384"/>
</dbReference>
<dbReference type="RefSeq" id="NP_999599.1">
    <property type="nucleotide sequence ID" value="NM_214434.2"/>
</dbReference>
<dbReference type="SMR" id="P39037"/>
<dbReference type="FunCoup" id="P39037">
    <property type="interactions" value="116"/>
</dbReference>
<dbReference type="STRING" id="9823.ENSSSCP00000009875"/>
<dbReference type="GlyCosmos" id="P39037">
    <property type="glycosylation" value="1 site, No reported glycans"/>
</dbReference>
<dbReference type="GlyGen" id="P39037">
    <property type="glycosylation" value="1 site"/>
</dbReference>
<dbReference type="iPTMnet" id="P39037"/>
<dbReference type="PaxDb" id="9823-ENSSSCP00000009875"/>
<dbReference type="PeptideAtlas" id="P39037"/>
<dbReference type="Ensembl" id="ENSSSCT00015089608.1">
    <property type="protein sequence ID" value="ENSSSCP00015036577.1"/>
    <property type="gene ID" value="ENSSSCG00015066703.1"/>
</dbReference>
<dbReference type="Ensembl" id="ENSSSCT00030072195.1">
    <property type="protein sequence ID" value="ENSSSCP00030032915.1"/>
    <property type="gene ID" value="ENSSSCG00030051810.1"/>
</dbReference>
<dbReference type="GeneID" id="404088"/>
<dbReference type="KEGG" id="ssc:404088"/>
<dbReference type="CTD" id="1447"/>
<dbReference type="eggNOG" id="ENOG502RU0R">
    <property type="taxonomic scope" value="Eukaryota"/>
</dbReference>
<dbReference type="HOGENOM" id="CLU_106775_0_0_1"/>
<dbReference type="InParanoid" id="P39037"/>
<dbReference type="OrthoDB" id="9838331at2759"/>
<dbReference type="TreeFam" id="TF336929"/>
<dbReference type="Proteomes" id="UP000008227">
    <property type="component" value="Unplaced"/>
</dbReference>
<dbReference type="Proteomes" id="UP000314985">
    <property type="component" value="Unplaced"/>
</dbReference>
<dbReference type="Proteomes" id="UP000694570">
    <property type="component" value="Unplaced"/>
</dbReference>
<dbReference type="Proteomes" id="UP000694571">
    <property type="component" value="Unplaced"/>
</dbReference>
<dbReference type="Proteomes" id="UP000694720">
    <property type="component" value="Unplaced"/>
</dbReference>
<dbReference type="Proteomes" id="UP000694722">
    <property type="component" value="Unplaced"/>
</dbReference>
<dbReference type="Proteomes" id="UP000694723">
    <property type="component" value="Unplaced"/>
</dbReference>
<dbReference type="Proteomes" id="UP000694724">
    <property type="component" value="Unplaced"/>
</dbReference>
<dbReference type="Proteomes" id="UP000694725">
    <property type="component" value="Unplaced"/>
</dbReference>
<dbReference type="Proteomes" id="UP000694726">
    <property type="component" value="Unplaced"/>
</dbReference>
<dbReference type="Proteomes" id="UP000694727">
    <property type="component" value="Unplaced"/>
</dbReference>
<dbReference type="Proteomes" id="UP000694728">
    <property type="component" value="Unplaced"/>
</dbReference>
<dbReference type="GO" id="GO:0005615">
    <property type="term" value="C:extracellular space"/>
    <property type="evidence" value="ECO:0000318"/>
    <property type="project" value="GO_Central"/>
</dbReference>
<dbReference type="InterPro" id="IPR001588">
    <property type="entry name" value="Casein"/>
</dbReference>
<dbReference type="InterPro" id="IPR016345">
    <property type="entry name" value="Casein_beta"/>
</dbReference>
<dbReference type="PANTHER" id="PTHR11500">
    <property type="entry name" value="BETA CASEIN"/>
    <property type="match status" value="1"/>
</dbReference>
<dbReference type="PANTHER" id="PTHR11500:SF0">
    <property type="entry name" value="BETA-CASEIN"/>
    <property type="match status" value="1"/>
</dbReference>
<dbReference type="Pfam" id="PF00363">
    <property type="entry name" value="Casein"/>
    <property type="match status" value="1"/>
</dbReference>
<dbReference type="PIRSF" id="PIRSF002372">
    <property type="entry name" value="Beta-casein"/>
    <property type="match status" value="1"/>
</dbReference>